<evidence type="ECO:0000250" key="1">
    <source>
        <dbReference type="UniProtKB" id="J9PAS6"/>
    </source>
</evidence>
<evidence type="ECO:0000250" key="2">
    <source>
        <dbReference type="UniProtKB" id="P09132"/>
    </source>
</evidence>
<evidence type="ECO:0000256" key="3">
    <source>
        <dbReference type="SAM" id="MobiDB-lite"/>
    </source>
</evidence>
<evidence type="ECO:0000305" key="4"/>
<dbReference type="EMBL" id="BC103304">
    <property type="protein sequence ID" value="AAI03305.1"/>
    <property type="molecule type" value="mRNA"/>
</dbReference>
<dbReference type="RefSeq" id="NP_001029650.1">
    <property type="nucleotide sequence ID" value="NM_001034478.1"/>
</dbReference>
<dbReference type="SMR" id="Q3ZBG7"/>
<dbReference type="FunCoup" id="Q3ZBG7">
    <property type="interactions" value="3503"/>
</dbReference>
<dbReference type="STRING" id="9913.ENSBTAP00000017007"/>
<dbReference type="PaxDb" id="9913-ENSBTAP00000017007"/>
<dbReference type="Ensembl" id="ENSBTAT00000017007.7">
    <property type="protein sequence ID" value="ENSBTAP00000017007.5"/>
    <property type="gene ID" value="ENSBTAG00000012803.7"/>
</dbReference>
<dbReference type="GeneID" id="514960"/>
<dbReference type="KEGG" id="bta:514960"/>
<dbReference type="CTD" id="6728"/>
<dbReference type="VEuPathDB" id="HostDB:ENSBTAG00000012803"/>
<dbReference type="VGNC" id="VGNC:55145">
    <property type="gene designation" value="SRP19"/>
</dbReference>
<dbReference type="eggNOG" id="KOG3198">
    <property type="taxonomic scope" value="Eukaryota"/>
</dbReference>
<dbReference type="GeneTree" id="ENSGT00390000004950"/>
<dbReference type="HOGENOM" id="CLU_064201_2_1_1"/>
<dbReference type="InParanoid" id="Q3ZBG7"/>
<dbReference type="OMA" id="QMERWIC"/>
<dbReference type="OrthoDB" id="2190947at2759"/>
<dbReference type="TreeFam" id="TF106248"/>
<dbReference type="Reactome" id="R-BTA-1799339">
    <property type="pathway name" value="SRP-dependent cotranslational protein targeting to membrane"/>
</dbReference>
<dbReference type="Proteomes" id="UP000009136">
    <property type="component" value="Chromosome 10"/>
</dbReference>
<dbReference type="Bgee" id="ENSBTAG00000012803">
    <property type="expression patterns" value="Expressed in oocyte and 106 other cell types or tissues"/>
</dbReference>
<dbReference type="GO" id="GO:0005829">
    <property type="term" value="C:cytosol"/>
    <property type="evidence" value="ECO:0007669"/>
    <property type="project" value="Ensembl"/>
</dbReference>
<dbReference type="GO" id="GO:0016604">
    <property type="term" value="C:nuclear body"/>
    <property type="evidence" value="ECO:0007669"/>
    <property type="project" value="Ensembl"/>
</dbReference>
<dbReference type="GO" id="GO:0005730">
    <property type="term" value="C:nucleolus"/>
    <property type="evidence" value="ECO:0007669"/>
    <property type="project" value="UniProtKB-SubCell"/>
</dbReference>
<dbReference type="GO" id="GO:0005786">
    <property type="term" value="C:signal recognition particle, endoplasmic reticulum targeting"/>
    <property type="evidence" value="ECO:0000318"/>
    <property type="project" value="GO_Central"/>
</dbReference>
<dbReference type="GO" id="GO:0008312">
    <property type="term" value="F:7S RNA binding"/>
    <property type="evidence" value="ECO:0000318"/>
    <property type="project" value="GO_Central"/>
</dbReference>
<dbReference type="GO" id="GO:0043022">
    <property type="term" value="F:ribosome binding"/>
    <property type="evidence" value="ECO:0007669"/>
    <property type="project" value="Ensembl"/>
</dbReference>
<dbReference type="GO" id="GO:0006617">
    <property type="term" value="P:SRP-dependent cotranslational protein targeting to membrane, signal sequence recognition"/>
    <property type="evidence" value="ECO:0000318"/>
    <property type="project" value="GO_Central"/>
</dbReference>
<dbReference type="FunFam" id="3.30.56.30:FF:000001">
    <property type="entry name" value="signal recognition particle 19 kDa protein"/>
    <property type="match status" value="1"/>
</dbReference>
<dbReference type="Gene3D" id="3.30.56.30">
    <property type="entry name" value="Signal recognition particle, SRP19-like subunit"/>
    <property type="match status" value="1"/>
</dbReference>
<dbReference type="InterPro" id="IPR002778">
    <property type="entry name" value="Signal_recog_particle_SRP19"/>
</dbReference>
<dbReference type="InterPro" id="IPR036521">
    <property type="entry name" value="SRP19-like_sf"/>
</dbReference>
<dbReference type="PANTHER" id="PTHR17453">
    <property type="entry name" value="SIGNAL RECOGNITION PARTICLE 19 KD PROTEIN"/>
    <property type="match status" value="1"/>
</dbReference>
<dbReference type="PANTHER" id="PTHR17453:SF0">
    <property type="entry name" value="SIGNAL RECOGNITION PARTICLE 19 KDA PROTEIN"/>
    <property type="match status" value="1"/>
</dbReference>
<dbReference type="Pfam" id="PF01922">
    <property type="entry name" value="SRP19"/>
    <property type="match status" value="1"/>
</dbReference>
<dbReference type="SUPFAM" id="SSF69695">
    <property type="entry name" value="SRP19"/>
    <property type="match status" value="1"/>
</dbReference>
<comment type="function">
    <text evidence="1">Component of the signal recognition particle (SRP) complex, a ribonucleoprotein complex that mediates the cotranslational targeting of secretory and membrane proteins to the endoplasmic reticulum (ER) (By similarity). Binds directly to 7SL RNA (By similarity). Mediates binding of SRP54 to the SRP complex (By similarity).</text>
</comment>
<comment type="subunit">
    <text evidence="2">Component of a signal recognition particle complex that consists of a 7SL RNA molecule of 300 nucleotides and six protein subunits: SRP72, SRP68, SRP54, SRP19, SRP14 and SRP9. Interacts with IPO5, IPO7, IPO8, KPNB1 and TNPO1. Interactions with IPO8 and TNPO1 may be involved in SRP19 import into the nucleus (By similarity).</text>
</comment>
<comment type="subcellular location">
    <subcellularLocation>
        <location evidence="2">Cytoplasm</location>
    </subcellularLocation>
    <subcellularLocation>
        <location evidence="2">Nucleus</location>
        <location evidence="2">Nucleolus</location>
    </subcellularLocation>
    <subcellularLocation>
        <location evidence="2">Nucleus</location>
        <location evidence="2">Nucleoplasm</location>
    </subcellularLocation>
    <text evidence="2">Although the signal recognition particle complex acts in the cytoplasm, it assembles at least in part in the nucleus and/or the nucleolus. SRP19 nuclear import may be mediated by IPO8/Imp8 and TPNO1/Trn.</text>
</comment>
<comment type="similarity">
    <text evidence="4">Belongs to the SRP19 family.</text>
</comment>
<accession>Q3ZBG7</accession>
<protein>
    <recommendedName>
        <fullName>Signal recognition particle 19 kDa protein</fullName>
        <shortName>SRP19</shortName>
    </recommendedName>
</protein>
<sequence>MACAAARSPADQDRFICIYPAYLNNKKTIAEGRRIPISKAVENPTATEIQDVCAAVGLNVFLEKNKMYSREWNRDLQYRGRVRVQLKQEDGSLCLVQFPSRKSVMLYAAEMIPKLKTRTQKTGGGDQSLQQGEGSKKGKGKKKK</sequence>
<organism>
    <name type="scientific">Bos taurus</name>
    <name type="common">Bovine</name>
    <dbReference type="NCBI Taxonomy" id="9913"/>
    <lineage>
        <taxon>Eukaryota</taxon>
        <taxon>Metazoa</taxon>
        <taxon>Chordata</taxon>
        <taxon>Craniata</taxon>
        <taxon>Vertebrata</taxon>
        <taxon>Euteleostomi</taxon>
        <taxon>Mammalia</taxon>
        <taxon>Eutheria</taxon>
        <taxon>Laurasiatheria</taxon>
        <taxon>Artiodactyla</taxon>
        <taxon>Ruminantia</taxon>
        <taxon>Pecora</taxon>
        <taxon>Bovidae</taxon>
        <taxon>Bovinae</taxon>
        <taxon>Bos</taxon>
    </lineage>
</organism>
<name>SRP19_BOVIN</name>
<feature type="chain" id="PRO_0000247642" description="Signal recognition particle 19 kDa protein">
    <location>
        <begin position="1"/>
        <end position="144"/>
    </location>
</feature>
<feature type="region of interest" description="Disordered" evidence="3">
    <location>
        <begin position="117"/>
        <end position="144"/>
    </location>
</feature>
<reference key="1">
    <citation type="submission" date="2005-08" db="EMBL/GenBank/DDBJ databases">
        <authorList>
            <consortium name="NIH - Mammalian Gene Collection (MGC) project"/>
        </authorList>
    </citation>
    <scope>NUCLEOTIDE SEQUENCE [LARGE SCALE MRNA]</scope>
    <source>
        <strain>Hereford</strain>
        <tissue>Uterus</tissue>
    </source>
</reference>
<keyword id="KW-0963">Cytoplasm</keyword>
<keyword id="KW-0539">Nucleus</keyword>
<keyword id="KW-1185">Reference proteome</keyword>
<keyword id="KW-0687">Ribonucleoprotein</keyword>
<keyword id="KW-0694">RNA-binding</keyword>
<keyword id="KW-0733">Signal recognition particle</keyword>
<proteinExistence type="evidence at transcript level"/>
<gene>
    <name type="primary">SRP19</name>
</gene>